<reference key="1">
    <citation type="journal article" date="2011" name="Toxicon">
        <title>The tale of a resting gland: transcriptome of a replete venom gland from the scorpion Hottentotta judaicus.</title>
        <authorList>
            <person name="Morgenstern D."/>
            <person name="Rohde B.H."/>
            <person name="King G.F."/>
            <person name="Tal T."/>
            <person name="Sher D."/>
            <person name="Zlotkin E."/>
        </authorList>
    </citation>
    <scope>NUCLEOTIDE SEQUENCE [MRNA]</scope>
    <source>
        <tissue>Venom gland</tissue>
    </source>
</reference>
<protein>
    <recommendedName>
        <fullName evidence="2">Amphipathic peptide Hj0164</fullName>
    </recommendedName>
</protein>
<evidence type="ECO:0000250" key="1"/>
<evidence type="ECO:0000303" key="2">
    <source>
    </source>
</evidence>
<evidence type="ECO:0000305" key="3"/>
<dbReference type="EMBL" id="HQ288198">
    <property type="protein sequence ID" value="ADY39620.1"/>
    <property type="molecule type" value="mRNA"/>
</dbReference>
<dbReference type="GO" id="GO:0005576">
    <property type="term" value="C:extracellular region"/>
    <property type="evidence" value="ECO:0007669"/>
    <property type="project" value="UniProtKB-SubCell"/>
</dbReference>
<dbReference type="GO" id="GO:0016020">
    <property type="term" value="C:membrane"/>
    <property type="evidence" value="ECO:0007669"/>
    <property type="project" value="UniProtKB-KW"/>
</dbReference>
<dbReference type="GO" id="GO:0044218">
    <property type="term" value="C:other organism cell membrane"/>
    <property type="evidence" value="ECO:0007669"/>
    <property type="project" value="UniProtKB-KW"/>
</dbReference>
<dbReference type="GO" id="GO:0042742">
    <property type="term" value="P:defense response to bacterium"/>
    <property type="evidence" value="ECO:0007669"/>
    <property type="project" value="UniProtKB-KW"/>
</dbReference>
<dbReference type="GO" id="GO:0031640">
    <property type="term" value="P:killing of cells of another organism"/>
    <property type="evidence" value="ECO:0007669"/>
    <property type="project" value="UniProtKB-KW"/>
</dbReference>
<proteinExistence type="evidence at transcript level"/>
<feature type="signal peptide" evidence="1">
    <location>
        <begin position="1"/>
        <end position="23"/>
    </location>
</feature>
<feature type="peptide" id="PRO_0000418789" description="Amphipathic peptide Hj0164">
    <location>
        <begin position="24"/>
        <end position="33"/>
    </location>
</feature>
<feature type="propeptide" id="PRO_0000418790" evidence="1">
    <location>
        <begin position="37"/>
        <end position="45" status="greater than"/>
    </location>
</feature>
<feature type="modified residue" description="Phenylalanine amide" evidence="1">
    <location>
        <position position="33"/>
    </location>
</feature>
<feature type="non-terminal residue">
    <location>
        <position position="45"/>
    </location>
</feature>
<keyword id="KW-0027">Amidation</keyword>
<keyword id="KW-0044">Antibiotic</keyword>
<keyword id="KW-0929">Antimicrobial</keyword>
<keyword id="KW-0165">Cleavage on pair of basic residues</keyword>
<keyword id="KW-0204">Cytolysis</keyword>
<keyword id="KW-0472">Membrane</keyword>
<keyword id="KW-0964">Secreted</keyword>
<keyword id="KW-0732">Signal</keyword>
<keyword id="KW-1052">Target cell membrane</keyword>
<keyword id="KW-1053">Target membrane</keyword>
<keyword id="KW-0812">Transmembrane</keyword>
<sequence length="45" mass="5049">MKSQAFFLLFLVVLLLATTQSEAFLGALLSKIFGKRSLRDVDTMK</sequence>
<accession>F1CJ89</accession>
<name>NDB4_HOTJU</name>
<organism>
    <name type="scientific">Hottentotta judaicus</name>
    <name type="common">Black scorpion</name>
    <name type="synonym">Buthotus judaicus</name>
    <dbReference type="NCBI Taxonomy" id="6863"/>
    <lineage>
        <taxon>Eukaryota</taxon>
        <taxon>Metazoa</taxon>
        <taxon>Ecdysozoa</taxon>
        <taxon>Arthropoda</taxon>
        <taxon>Chelicerata</taxon>
        <taxon>Arachnida</taxon>
        <taxon>Scorpiones</taxon>
        <taxon>Buthida</taxon>
        <taxon>Buthoidea</taxon>
        <taxon>Buthidae</taxon>
        <taxon>Hottentotta</taxon>
    </lineage>
</organism>
<comment type="function">
    <text evidence="1">Amphipathic peptide that shows antibacterial activities.</text>
</comment>
<comment type="subcellular location">
    <subcellularLocation>
        <location evidence="1">Secreted</location>
    </subcellularLocation>
    <subcellularLocation>
        <location evidence="1">Target cell membrane</location>
    </subcellularLocation>
    <text evidence="1">Forms a helical membrane channel in the prey.</text>
</comment>
<comment type="tissue specificity">
    <text>Expressed by the venom gland.</text>
</comment>
<comment type="similarity">
    <text evidence="3">Belongs to the non-disulfide-bridged peptide (NDBP) superfamily. Short antimicrobial peptide (group 4) family.</text>
</comment>